<feature type="signal peptide" evidence="1">
    <location>
        <begin position="1"/>
        <end position="29"/>
    </location>
</feature>
<feature type="chain" id="PRO_0000403105" description="L-type lectin-domain containing receptor kinase S.1">
    <location>
        <begin position="30"/>
        <end position="656"/>
    </location>
</feature>
<feature type="topological domain" description="Extracellular" evidence="1">
    <location>
        <begin position="30"/>
        <end position="304"/>
    </location>
</feature>
<feature type="transmembrane region" description="Helical" evidence="1">
    <location>
        <begin position="305"/>
        <end position="325"/>
    </location>
</feature>
<feature type="topological domain" description="Cytoplasmic" evidence="1">
    <location>
        <begin position="326"/>
        <end position="656"/>
    </location>
</feature>
<feature type="domain" description="Protein kinase" evidence="2">
    <location>
        <begin position="361"/>
        <end position="639"/>
    </location>
</feature>
<feature type="region of interest" description="Legume-lectin like" evidence="1">
    <location>
        <begin position="30"/>
        <end position="273"/>
    </location>
</feature>
<feature type="active site" description="Proton acceptor" evidence="2">
    <location>
        <position position="485"/>
    </location>
</feature>
<feature type="binding site" evidence="2">
    <location>
        <begin position="367"/>
        <end position="375"/>
    </location>
    <ligand>
        <name>ATP</name>
        <dbReference type="ChEBI" id="CHEBI:30616"/>
    </ligand>
</feature>
<feature type="binding site" evidence="2">
    <location>
        <position position="389"/>
    </location>
    <ligand>
        <name>ATP</name>
        <dbReference type="ChEBI" id="CHEBI:30616"/>
    </ligand>
</feature>
<feature type="glycosylation site" description="N-linked (GlcNAc...) asparagine" evidence="1">
    <location>
        <position position="42"/>
    </location>
</feature>
<feature type="glycosylation site" description="N-linked (GlcNAc...) asparagine" evidence="1">
    <location>
        <position position="63"/>
    </location>
</feature>
<feature type="glycosylation site" description="N-linked (GlcNAc...) asparagine" evidence="1">
    <location>
        <position position="121"/>
    </location>
</feature>
<feature type="glycosylation site" description="N-linked (GlcNAc...) asparagine" evidence="1">
    <location>
        <position position="139"/>
    </location>
</feature>
<feature type="glycosylation site" description="N-linked (GlcNAc...) asparagine" evidence="1">
    <location>
        <position position="191"/>
    </location>
</feature>
<feature type="glycosylation site" description="N-linked (GlcNAc...) asparagine" evidence="1">
    <location>
        <position position="219"/>
    </location>
</feature>
<feature type="glycosylation site" description="N-linked (GlcNAc...) asparagine" evidence="1">
    <location>
        <position position="282"/>
    </location>
</feature>
<feature type="glycosylation site" description="N-linked (GlcNAc...) asparagine" evidence="1">
    <location>
        <position position="293"/>
    </location>
</feature>
<keyword id="KW-0067">ATP-binding</keyword>
<keyword id="KW-1003">Cell membrane</keyword>
<keyword id="KW-0325">Glycoprotein</keyword>
<keyword id="KW-0418">Kinase</keyword>
<keyword id="KW-0430">Lectin</keyword>
<keyword id="KW-0472">Membrane</keyword>
<keyword id="KW-0547">Nucleotide-binding</keyword>
<keyword id="KW-0611">Plant defense</keyword>
<keyword id="KW-0675">Receptor</keyword>
<keyword id="KW-1185">Reference proteome</keyword>
<keyword id="KW-0723">Serine/threonine-protein kinase</keyword>
<keyword id="KW-0732">Signal</keyword>
<keyword id="KW-0808">Transferase</keyword>
<keyword id="KW-0812">Transmembrane</keyword>
<keyword id="KW-1133">Transmembrane helix</keyword>
<proteinExistence type="evidence at protein level"/>
<organism>
    <name type="scientific">Arabidopsis thaliana</name>
    <name type="common">Mouse-ear cress</name>
    <dbReference type="NCBI Taxonomy" id="3702"/>
    <lineage>
        <taxon>Eukaryota</taxon>
        <taxon>Viridiplantae</taxon>
        <taxon>Streptophyta</taxon>
        <taxon>Embryophyta</taxon>
        <taxon>Tracheophyta</taxon>
        <taxon>Spermatophyta</taxon>
        <taxon>Magnoliopsida</taxon>
        <taxon>eudicotyledons</taxon>
        <taxon>Gunneridae</taxon>
        <taxon>Pentapetalae</taxon>
        <taxon>rosids</taxon>
        <taxon>malvids</taxon>
        <taxon>Brassicales</taxon>
        <taxon>Brassicaceae</taxon>
        <taxon>Camelineae</taxon>
        <taxon>Arabidopsis</taxon>
    </lineage>
</organism>
<accession>Q9M9E0</accession>
<evidence type="ECO:0000255" key="1"/>
<evidence type="ECO:0000255" key="2">
    <source>
        <dbReference type="PROSITE-ProRule" id="PRU00159"/>
    </source>
</evidence>
<evidence type="ECO:0000269" key="3">
    <source>
    </source>
</evidence>
<evidence type="ECO:0000303" key="4">
    <source>
    </source>
</evidence>
<evidence type="ECO:0000305" key="5"/>
<evidence type="ECO:0000305" key="6">
    <source>
    </source>
</evidence>
<evidence type="ECO:0000312" key="7">
    <source>
        <dbReference type="Araport" id="AT1G15530"/>
    </source>
</evidence>
<evidence type="ECO:0000312" key="8">
    <source>
        <dbReference type="EMBL" id="AAF71991.1"/>
    </source>
</evidence>
<dbReference type="EC" id="2.7.11.1" evidence="2"/>
<dbReference type="EMBL" id="AC013453">
    <property type="protein sequence ID" value="AAF71991.1"/>
    <property type="molecule type" value="Genomic_DNA"/>
</dbReference>
<dbReference type="EMBL" id="CP002684">
    <property type="protein sequence ID" value="AEE29333.1"/>
    <property type="molecule type" value="Genomic_DNA"/>
</dbReference>
<dbReference type="EMBL" id="DQ446253">
    <property type="protein sequence ID" value="ABE65623.1"/>
    <property type="molecule type" value="mRNA"/>
</dbReference>
<dbReference type="PIR" id="B86289">
    <property type="entry name" value="B86289"/>
</dbReference>
<dbReference type="RefSeq" id="NP_173006.1">
    <property type="nucleotide sequence ID" value="NM_101422.1"/>
</dbReference>
<dbReference type="SMR" id="Q9M9E0"/>
<dbReference type="FunCoup" id="Q9M9E0">
    <property type="interactions" value="149"/>
</dbReference>
<dbReference type="GlyCosmos" id="Q9M9E0">
    <property type="glycosylation" value="8 sites, No reported glycans"/>
</dbReference>
<dbReference type="GlyGen" id="Q9M9E0">
    <property type="glycosylation" value="8 sites"/>
</dbReference>
<dbReference type="iPTMnet" id="Q9M9E0"/>
<dbReference type="PaxDb" id="3702-AT1G15530.1"/>
<dbReference type="ProteomicsDB" id="238568"/>
<dbReference type="EnsemblPlants" id="AT1G15530.1">
    <property type="protein sequence ID" value="AT1G15530.1"/>
    <property type="gene ID" value="AT1G15530"/>
</dbReference>
<dbReference type="GeneID" id="838123"/>
<dbReference type="Gramene" id="AT1G15530.1">
    <property type="protein sequence ID" value="AT1G15530.1"/>
    <property type="gene ID" value="AT1G15530"/>
</dbReference>
<dbReference type="KEGG" id="ath:AT1G15530"/>
<dbReference type="Araport" id="AT1G15530"/>
<dbReference type="TAIR" id="AT1G15530">
    <property type="gene designation" value="LECRK-S.1"/>
</dbReference>
<dbReference type="eggNOG" id="ENOG502QR0Z">
    <property type="taxonomic scope" value="Eukaryota"/>
</dbReference>
<dbReference type="HOGENOM" id="CLU_000288_62_3_1"/>
<dbReference type="InParanoid" id="Q9M9E0"/>
<dbReference type="OMA" id="KLYQHGQ"/>
<dbReference type="OrthoDB" id="547665at2759"/>
<dbReference type="PhylomeDB" id="Q9M9E0"/>
<dbReference type="PRO" id="PR:Q9M9E0"/>
<dbReference type="Proteomes" id="UP000006548">
    <property type="component" value="Chromosome 1"/>
</dbReference>
<dbReference type="ExpressionAtlas" id="Q9M9E0">
    <property type="expression patterns" value="baseline and differential"/>
</dbReference>
<dbReference type="GO" id="GO:0000325">
    <property type="term" value="C:plant-type vacuole"/>
    <property type="evidence" value="ECO:0007005"/>
    <property type="project" value="TAIR"/>
</dbReference>
<dbReference type="GO" id="GO:0005886">
    <property type="term" value="C:plasma membrane"/>
    <property type="evidence" value="ECO:0007005"/>
    <property type="project" value="TAIR"/>
</dbReference>
<dbReference type="GO" id="GO:0005524">
    <property type="term" value="F:ATP binding"/>
    <property type="evidence" value="ECO:0007669"/>
    <property type="project" value="UniProtKB-KW"/>
</dbReference>
<dbReference type="GO" id="GO:0030246">
    <property type="term" value="F:carbohydrate binding"/>
    <property type="evidence" value="ECO:0007669"/>
    <property type="project" value="UniProtKB-KW"/>
</dbReference>
<dbReference type="GO" id="GO:0106310">
    <property type="term" value="F:protein serine kinase activity"/>
    <property type="evidence" value="ECO:0007669"/>
    <property type="project" value="RHEA"/>
</dbReference>
<dbReference type="GO" id="GO:0004674">
    <property type="term" value="F:protein serine/threonine kinase activity"/>
    <property type="evidence" value="ECO:0007669"/>
    <property type="project" value="UniProtKB-KW"/>
</dbReference>
<dbReference type="GO" id="GO:0042742">
    <property type="term" value="P:defense response to bacterium"/>
    <property type="evidence" value="ECO:0000315"/>
    <property type="project" value="UniProtKB"/>
</dbReference>
<dbReference type="GO" id="GO:0002229">
    <property type="term" value="P:defense response to oomycetes"/>
    <property type="evidence" value="ECO:0000315"/>
    <property type="project" value="UniProtKB"/>
</dbReference>
<dbReference type="CDD" id="cd06899">
    <property type="entry name" value="lectin_legume_LecRK_Arcelin_ConA"/>
    <property type="match status" value="1"/>
</dbReference>
<dbReference type="CDD" id="cd14066">
    <property type="entry name" value="STKc_IRAK"/>
    <property type="match status" value="1"/>
</dbReference>
<dbReference type="FunFam" id="3.30.200.20:FF:000423">
    <property type="entry name" value="L-type lectin-domain containing receptor kinase S.1"/>
    <property type="match status" value="1"/>
</dbReference>
<dbReference type="FunFam" id="1.10.510.10:FF:000108">
    <property type="entry name" value="L-type lectin-domain containing receptor kinase S.4"/>
    <property type="match status" value="1"/>
</dbReference>
<dbReference type="FunFam" id="2.60.120.200:FF:000086">
    <property type="entry name" value="L-type lectin-domain containing receptor kinase S.4"/>
    <property type="match status" value="1"/>
</dbReference>
<dbReference type="Gene3D" id="2.60.120.200">
    <property type="match status" value="1"/>
</dbReference>
<dbReference type="Gene3D" id="3.30.200.20">
    <property type="entry name" value="Phosphorylase Kinase, domain 1"/>
    <property type="match status" value="1"/>
</dbReference>
<dbReference type="Gene3D" id="1.10.510.10">
    <property type="entry name" value="Transferase(Phosphotransferase) domain 1"/>
    <property type="match status" value="1"/>
</dbReference>
<dbReference type="InterPro" id="IPR013320">
    <property type="entry name" value="ConA-like_dom_sf"/>
</dbReference>
<dbReference type="InterPro" id="IPR011009">
    <property type="entry name" value="Kinase-like_dom_sf"/>
</dbReference>
<dbReference type="InterPro" id="IPR050528">
    <property type="entry name" value="L-type_Lectin-RKs"/>
</dbReference>
<dbReference type="InterPro" id="IPR019825">
    <property type="entry name" value="Lectin_legB_Mn/Ca_BS"/>
</dbReference>
<dbReference type="InterPro" id="IPR001220">
    <property type="entry name" value="Legume_lectin_dom"/>
</dbReference>
<dbReference type="InterPro" id="IPR000719">
    <property type="entry name" value="Prot_kinase_dom"/>
</dbReference>
<dbReference type="InterPro" id="IPR017441">
    <property type="entry name" value="Protein_kinase_ATP_BS"/>
</dbReference>
<dbReference type="InterPro" id="IPR008271">
    <property type="entry name" value="Ser/Thr_kinase_AS"/>
</dbReference>
<dbReference type="PANTHER" id="PTHR27007">
    <property type="match status" value="1"/>
</dbReference>
<dbReference type="Pfam" id="PF00139">
    <property type="entry name" value="Lectin_legB"/>
    <property type="match status" value="1"/>
</dbReference>
<dbReference type="Pfam" id="PF00069">
    <property type="entry name" value="Pkinase"/>
    <property type="match status" value="1"/>
</dbReference>
<dbReference type="SMART" id="SM00220">
    <property type="entry name" value="S_TKc"/>
    <property type="match status" value="1"/>
</dbReference>
<dbReference type="SUPFAM" id="SSF49899">
    <property type="entry name" value="Concanavalin A-like lectins/glucanases"/>
    <property type="match status" value="1"/>
</dbReference>
<dbReference type="SUPFAM" id="SSF56112">
    <property type="entry name" value="Protein kinase-like (PK-like)"/>
    <property type="match status" value="1"/>
</dbReference>
<dbReference type="PROSITE" id="PS00307">
    <property type="entry name" value="LECTIN_LEGUME_BETA"/>
    <property type="match status" value="1"/>
</dbReference>
<dbReference type="PROSITE" id="PS00107">
    <property type="entry name" value="PROTEIN_KINASE_ATP"/>
    <property type="match status" value="1"/>
</dbReference>
<dbReference type="PROSITE" id="PS50011">
    <property type="entry name" value="PROTEIN_KINASE_DOM"/>
    <property type="match status" value="1"/>
</dbReference>
<dbReference type="PROSITE" id="PS00108">
    <property type="entry name" value="PROTEIN_KINASE_ST"/>
    <property type="match status" value="1"/>
</dbReference>
<comment type="function">
    <text evidence="3">Involved in resistance response to the pathogenic oomycetes Phytophthora infestans and Phytophthora capsici and to the pathogenic bacteria Pseudomonas syringae.</text>
</comment>
<comment type="catalytic activity">
    <reaction evidence="2">
        <text>L-seryl-[protein] + ATP = O-phospho-L-seryl-[protein] + ADP + H(+)</text>
        <dbReference type="Rhea" id="RHEA:17989"/>
        <dbReference type="Rhea" id="RHEA-COMP:9863"/>
        <dbReference type="Rhea" id="RHEA-COMP:11604"/>
        <dbReference type="ChEBI" id="CHEBI:15378"/>
        <dbReference type="ChEBI" id="CHEBI:29999"/>
        <dbReference type="ChEBI" id="CHEBI:30616"/>
        <dbReference type="ChEBI" id="CHEBI:83421"/>
        <dbReference type="ChEBI" id="CHEBI:456216"/>
        <dbReference type="EC" id="2.7.11.1"/>
    </reaction>
</comment>
<comment type="catalytic activity">
    <reaction evidence="2">
        <text>L-threonyl-[protein] + ATP = O-phospho-L-threonyl-[protein] + ADP + H(+)</text>
        <dbReference type="Rhea" id="RHEA:46608"/>
        <dbReference type="Rhea" id="RHEA-COMP:11060"/>
        <dbReference type="Rhea" id="RHEA-COMP:11605"/>
        <dbReference type="ChEBI" id="CHEBI:15378"/>
        <dbReference type="ChEBI" id="CHEBI:30013"/>
        <dbReference type="ChEBI" id="CHEBI:30616"/>
        <dbReference type="ChEBI" id="CHEBI:61977"/>
        <dbReference type="ChEBI" id="CHEBI:456216"/>
        <dbReference type="EC" id="2.7.11.1"/>
    </reaction>
</comment>
<comment type="subcellular location">
    <subcellularLocation>
        <location evidence="6">Cell membrane</location>
        <topology evidence="1">Single-pass type I membrane protein</topology>
    </subcellularLocation>
</comment>
<comment type="disruption phenotype">
    <text evidence="3">Increased susceptibility to the oomycetes Phytophthora brassicae and Phytophthora capsici and to the bacteria Pseudomonas syringae, characterized by stronger necrotic symptoms and higher bacterial proliferation.</text>
</comment>
<comment type="similarity">
    <text evidence="5">In the C-terminal section; belongs to the protein kinase superfamily. Ser/Thr protein kinase family.</text>
</comment>
<comment type="similarity">
    <text evidence="5">In the N-terminal section; belongs to the leguminous lectin family.</text>
</comment>
<name>LRKS1_ARATH</name>
<reference key="1">
    <citation type="journal article" date="2000" name="Nature">
        <title>Sequence and analysis of chromosome 1 of the plant Arabidopsis thaliana.</title>
        <authorList>
            <person name="Theologis A."/>
            <person name="Ecker J.R."/>
            <person name="Palm C.J."/>
            <person name="Federspiel N.A."/>
            <person name="Kaul S."/>
            <person name="White O."/>
            <person name="Alonso J."/>
            <person name="Altafi H."/>
            <person name="Araujo R."/>
            <person name="Bowman C.L."/>
            <person name="Brooks S.Y."/>
            <person name="Buehler E."/>
            <person name="Chan A."/>
            <person name="Chao Q."/>
            <person name="Chen H."/>
            <person name="Cheuk R.F."/>
            <person name="Chin C.W."/>
            <person name="Chung M.K."/>
            <person name="Conn L."/>
            <person name="Conway A.B."/>
            <person name="Conway A.R."/>
            <person name="Creasy T.H."/>
            <person name="Dewar K."/>
            <person name="Dunn P."/>
            <person name="Etgu P."/>
            <person name="Feldblyum T.V."/>
            <person name="Feng J.-D."/>
            <person name="Fong B."/>
            <person name="Fujii C.Y."/>
            <person name="Gill J.E."/>
            <person name="Goldsmith A.D."/>
            <person name="Haas B."/>
            <person name="Hansen N.F."/>
            <person name="Hughes B."/>
            <person name="Huizar L."/>
            <person name="Hunter J.L."/>
            <person name="Jenkins J."/>
            <person name="Johnson-Hopson C."/>
            <person name="Khan S."/>
            <person name="Khaykin E."/>
            <person name="Kim C.J."/>
            <person name="Koo H.L."/>
            <person name="Kremenetskaia I."/>
            <person name="Kurtz D.B."/>
            <person name="Kwan A."/>
            <person name="Lam B."/>
            <person name="Langin-Hooper S."/>
            <person name="Lee A."/>
            <person name="Lee J.M."/>
            <person name="Lenz C.A."/>
            <person name="Li J.H."/>
            <person name="Li Y.-P."/>
            <person name="Lin X."/>
            <person name="Liu S.X."/>
            <person name="Liu Z.A."/>
            <person name="Luros J.S."/>
            <person name="Maiti R."/>
            <person name="Marziali A."/>
            <person name="Militscher J."/>
            <person name="Miranda M."/>
            <person name="Nguyen M."/>
            <person name="Nierman W.C."/>
            <person name="Osborne B.I."/>
            <person name="Pai G."/>
            <person name="Peterson J."/>
            <person name="Pham P.K."/>
            <person name="Rizzo M."/>
            <person name="Rooney T."/>
            <person name="Rowley D."/>
            <person name="Sakano H."/>
            <person name="Salzberg S.L."/>
            <person name="Schwartz J.R."/>
            <person name="Shinn P."/>
            <person name="Southwick A.M."/>
            <person name="Sun H."/>
            <person name="Tallon L.J."/>
            <person name="Tambunga G."/>
            <person name="Toriumi M.J."/>
            <person name="Town C.D."/>
            <person name="Utterback T."/>
            <person name="Van Aken S."/>
            <person name="Vaysberg M."/>
            <person name="Vysotskaia V.S."/>
            <person name="Walker M."/>
            <person name="Wu D."/>
            <person name="Yu G."/>
            <person name="Fraser C.M."/>
            <person name="Venter J.C."/>
            <person name="Davis R.W."/>
        </authorList>
    </citation>
    <scope>NUCLEOTIDE SEQUENCE [LARGE SCALE GENOMIC DNA]</scope>
    <source>
        <strain>cv. Columbia</strain>
    </source>
</reference>
<reference key="2">
    <citation type="journal article" date="2017" name="Plant J.">
        <title>Araport11: a complete reannotation of the Arabidopsis thaliana reference genome.</title>
        <authorList>
            <person name="Cheng C.Y."/>
            <person name="Krishnakumar V."/>
            <person name="Chan A.P."/>
            <person name="Thibaud-Nissen F."/>
            <person name="Schobel S."/>
            <person name="Town C.D."/>
        </authorList>
    </citation>
    <scope>GENOME REANNOTATION</scope>
    <source>
        <strain>cv. Columbia</strain>
    </source>
</reference>
<reference key="3">
    <citation type="journal article" date="2006" name="Plant Biotechnol. J.">
        <title>Simultaneous high-throughput recombinational cloning of open reading frames in closed and open configurations.</title>
        <authorList>
            <person name="Underwood B.A."/>
            <person name="Vanderhaeghen R."/>
            <person name="Whitford R."/>
            <person name="Town C.D."/>
            <person name="Hilson P."/>
        </authorList>
    </citation>
    <scope>NUCLEOTIDE SEQUENCE [LARGE SCALE MRNA]</scope>
    <source>
        <strain>cv. Columbia</strain>
    </source>
</reference>
<reference key="4">
    <citation type="journal article" date="2002" name="Crit. Rev. Plant Sci.">
        <title>Lectin receptor kinases in plants.</title>
        <authorList>
            <person name="Barre A."/>
            <person name="Herve C."/>
            <person name="Lescure B."/>
            <person name="Rouge P."/>
        </authorList>
    </citation>
    <scope>GENE FAMILY</scope>
</reference>
<reference key="5">
    <citation type="journal article" date="2007" name="Mol. Cell. Proteomics">
        <title>A high content in lipid-modified peripheral proteins and integral receptor kinases features in the arabidopsis plasma membrane proteome.</title>
        <authorList>
            <person name="Marmagne A."/>
            <person name="Ferro M."/>
            <person name="Meinnel T."/>
            <person name="Bruley C."/>
            <person name="Kuhn L."/>
            <person name="Garin J."/>
            <person name="Barbier-Brygoo H."/>
            <person name="Ephritikhine G."/>
        </authorList>
    </citation>
    <scope>IDENTIFICATION BY MASS SPECTROMETRY</scope>
    <scope>SUBCELLULAR LOCATION [LARGE SCALE ANALYSIS]</scope>
</reference>
<reference key="6">
    <citation type="journal article" date="2009" name="J. Exp. Bot.">
        <title>Arabidopsis L-type lectin receptor kinases: phylogeny, classification, and expression profiles.</title>
        <authorList>
            <person name="Bouwmeester K."/>
            <person name="Govers F."/>
        </authorList>
    </citation>
    <scope>GENE FAMILY</scope>
    <scope>NOMENCLATURE</scope>
</reference>
<reference key="7">
    <citation type="journal article" date="2014" name="Mol. Plant Microbe Interact.">
        <title>Phenotypic analyses of Arabidopsis T-DNA insertion lines and expression profiling reveal that multiple L-type lectin receptor kinases are involved in plant immunity.</title>
        <authorList>
            <person name="Wang Y."/>
            <person name="Bouwmeester K."/>
            <person name="Beseh P."/>
            <person name="Shan W."/>
            <person name="Govers F."/>
        </authorList>
    </citation>
    <scope>FUNCTION</scope>
    <scope>DISRUPTION PHENOTYPE</scope>
    <source>
        <strain>cv. Columbia</strain>
    </source>
</reference>
<sequence>MSWQWRRRQWPSPLLLILIVLHLVSSSSAIDFLYNSFSSVTNRTDVILIEDSRVESTVISLINDSDPLSFGRVFYPQKLTIIPDPTRNPTRLSSFSTSFVFSILPDISTSPGFGLCFVLSNSTSPPNAISSQYFGLFTNATVRFNAPLLAVEFDTGRNSEVNDIDDNHVGIDLNNIESTTSVTAGYYDSVNGSFVRFNMRNGNNVRAWIDFDGPNFQINVSVAPVGVLRPRRPTLTFRDPVIANYVSADMYAGFSASKTNWNEARRILAWSLSDTGALREINTTNLPVFFLENSSSSLSTGAIAGIVIGCVVFVALIGFGGYLIWKKLMREEEEEEIEEWELEFWPHRFSYEELAAATEVFSNDRLLGSGGFGKVYRGILSNNSEIAVKCVNHDSKQGLREFMAEISSMGRLQHKNLVQMRGWCRRKNELMLVYDYMPNGSLNQWIFDNPKEPMPWRRRRQVINDVAEGLNYLHHGWDQVVIHRDIKSSNILLDSEMRGRLGDFGLAKLYEHGGAPNTTRVVGTLGYLAPELASASAPTEASDVYSFGVVVLEVVSGRRPIEYAEEEDMVLVDWVRDLYGGGRVVDAADERVRSECETMEEVELLLKLGLACCHPDPAKRPNMREIVSLLLGSPQEDLLTGLTPAAAAADSTAAHA</sequence>
<protein>
    <recommendedName>
        <fullName evidence="4">L-type lectin-domain containing receptor kinase S.1</fullName>
        <shortName evidence="4">LecRK-S.1</shortName>
        <ecNumber evidence="2">2.7.11.1</ecNumber>
    </recommendedName>
</protein>
<gene>
    <name evidence="4" type="primary">LECRKS1</name>
    <name evidence="7" type="ordered locus">At1g15530</name>
    <name evidence="8" type="ORF">T16N11.4</name>
</gene>